<proteinExistence type="inferred from homology"/>
<sequence>MSNSNIHPTSIIAEGAKLGKNVKVGPYCIIGPEVILHDNVELKSHVVIEGITEIGESTVIYPFASIGQPPQILKYNNERSNTIIGSNNIIREYVTVQAGSQGGGMITRIGNNNLFMVGVHIGHDCKIGNNVVFANYVSLAGHIEVEDYVIIGGLSAVHQYARIGKHSMIGGLSPVGADVIPFGLASGKRAVLEGLNLVGMNRKGFDKAESLNALKIVQEIFLGEGNFADRIKQAQEKYKNNTIVMQIIDFLEHGSNRSFCSFEKTMSLRGELQSNLTKQPN</sequence>
<organism>
    <name type="scientific">Rickettsia bellii (strain OSU 85-389)</name>
    <dbReference type="NCBI Taxonomy" id="391896"/>
    <lineage>
        <taxon>Bacteria</taxon>
        <taxon>Pseudomonadati</taxon>
        <taxon>Pseudomonadota</taxon>
        <taxon>Alphaproteobacteria</taxon>
        <taxon>Rickettsiales</taxon>
        <taxon>Rickettsiaceae</taxon>
        <taxon>Rickettsieae</taxon>
        <taxon>Rickettsia</taxon>
        <taxon>belli group</taxon>
    </lineage>
</organism>
<protein>
    <recommendedName>
        <fullName evidence="1">Acyl-[acyl-carrier-protein]--UDP-N-acetylglucosamine O-acyltransferase</fullName>
        <shortName evidence="1">UDP-N-acetylglucosamine acyltransferase</shortName>
        <ecNumber evidence="1">2.3.1.129</ecNumber>
    </recommendedName>
</protein>
<feature type="chain" id="PRO_1000013177" description="Acyl-[acyl-carrier-protein]--UDP-N-acetylglucosamine O-acyltransferase">
    <location>
        <begin position="1"/>
        <end position="281"/>
    </location>
</feature>
<evidence type="ECO:0000255" key="1">
    <source>
        <dbReference type="HAMAP-Rule" id="MF_00387"/>
    </source>
</evidence>
<name>LPXA_RICB8</name>
<gene>
    <name evidence="1" type="primary">lpxA</name>
    <name type="ordered locus">A1I_01345</name>
</gene>
<reference key="1">
    <citation type="submission" date="2007-09" db="EMBL/GenBank/DDBJ databases">
        <title>Complete genome sequencing of Rickettsia bellii.</title>
        <authorList>
            <person name="Madan A."/>
            <person name="Lee H."/>
            <person name="Madan A."/>
            <person name="Yoon J.-G."/>
            <person name="Ryu G.-Y."/>
            <person name="Dasch G."/>
            <person name="Ereemeva M."/>
        </authorList>
    </citation>
    <scope>NUCLEOTIDE SEQUENCE [LARGE SCALE GENOMIC DNA]</scope>
    <source>
        <strain>OSU 85-389</strain>
    </source>
</reference>
<keyword id="KW-0012">Acyltransferase</keyword>
<keyword id="KW-0963">Cytoplasm</keyword>
<keyword id="KW-0441">Lipid A biosynthesis</keyword>
<keyword id="KW-0444">Lipid biosynthesis</keyword>
<keyword id="KW-0443">Lipid metabolism</keyword>
<keyword id="KW-0677">Repeat</keyword>
<keyword id="KW-0808">Transferase</keyword>
<comment type="function">
    <text evidence="1">Involved in the biosynthesis of lipid A, a phosphorylated glycolipid that anchors the lipopolysaccharide to the outer membrane of the cell.</text>
</comment>
<comment type="catalytic activity">
    <reaction evidence="1">
        <text>a (3R)-hydroxyacyl-[ACP] + UDP-N-acetyl-alpha-D-glucosamine = a UDP-3-O-[(3R)-3-hydroxyacyl]-N-acetyl-alpha-D-glucosamine + holo-[ACP]</text>
        <dbReference type="Rhea" id="RHEA:67812"/>
        <dbReference type="Rhea" id="RHEA-COMP:9685"/>
        <dbReference type="Rhea" id="RHEA-COMP:9945"/>
        <dbReference type="ChEBI" id="CHEBI:57705"/>
        <dbReference type="ChEBI" id="CHEBI:64479"/>
        <dbReference type="ChEBI" id="CHEBI:78827"/>
        <dbReference type="ChEBI" id="CHEBI:173225"/>
        <dbReference type="EC" id="2.3.1.129"/>
    </reaction>
</comment>
<comment type="pathway">
    <text evidence="1">Glycolipid biosynthesis; lipid IV(A) biosynthesis; lipid IV(A) from (3R)-3-hydroxytetradecanoyl-[acyl-carrier-protein] and UDP-N-acetyl-alpha-D-glucosamine: step 1/6.</text>
</comment>
<comment type="subunit">
    <text evidence="1">Homotrimer.</text>
</comment>
<comment type="subcellular location">
    <subcellularLocation>
        <location evidence="1">Cytoplasm</location>
    </subcellularLocation>
</comment>
<comment type="similarity">
    <text evidence="1">Belongs to the transferase hexapeptide repeat family. LpxA subfamily.</text>
</comment>
<dbReference type="EC" id="2.3.1.129" evidence="1"/>
<dbReference type="EMBL" id="CP000849">
    <property type="protein sequence ID" value="ABV78661.1"/>
    <property type="molecule type" value="Genomic_DNA"/>
</dbReference>
<dbReference type="RefSeq" id="WP_011477846.1">
    <property type="nucleotide sequence ID" value="NC_009883.1"/>
</dbReference>
<dbReference type="SMR" id="A8GUZ4"/>
<dbReference type="KEGG" id="rbo:A1I_01345"/>
<dbReference type="HOGENOM" id="CLU_061249_0_0_5"/>
<dbReference type="UniPathway" id="UPA00359">
    <property type="reaction ID" value="UER00477"/>
</dbReference>
<dbReference type="GO" id="GO:0005737">
    <property type="term" value="C:cytoplasm"/>
    <property type="evidence" value="ECO:0007669"/>
    <property type="project" value="UniProtKB-SubCell"/>
</dbReference>
<dbReference type="GO" id="GO:0016020">
    <property type="term" value="C:membrane"/>
    <property type="evidence" value="ECO:0007669"/>
    <property type="project" value="GOC"/>
</dbReference>
<dbReference type="GO" id="GO:0008780">
    <property type="term" value="F:acyl-[acyl-carrier-protein]-UDP-N-acetylglucosamine O-acyltransferase activity"/>
    <property type="evidence" value="ECO:0007669"/>
    <property type="project" value="UniProtKB-UniRule"/>
</dbReference>
<dbReference type="GO" id="GO:0009245">
    <property type="term" value="P:lipid A biosynthetic process"/>
    <property type="evidence" value="ECO:0007669"/>
    <property type="project" value="UniProtKB-UniRule"/>
</dbReference>
<dbReference type="CDD" id="cd03351">
    <property type="entry name" value="LbH_UDP-GlcNAc_AT"/>
    <property type="match status" value="1"/>
</dbReference>
<dbReference type="Gene3D" id="2.160.10.10">
    <property type="entry name" value="Hexapeptide repeat proteins"/>
    <property type="match status" value="1"/>
</dbReference>
<dbReference type="Gene3D" id="1.20.1180.10">
    <property type="entry name" value="Udp N-acetylglucosamine O-acyltransferase, C-terminal domain"/>
    <property type="match status" value="1"/>
</dbReference>
<dbReference type="HAMAP" id="MF_00387">
    <property type="entry name" value="LpxA"/>
    <property type="match status" value="1"/>
</dbReference>
<dbReference type="InterPro" id="IPR029098">
    <property type="entry name" value="Acetyltransf_C"/>
</dbReference>
<dbReference type="InterPro" id="IPR037157">
    <property type="entry name" value="Acetyltransf_C_sf"/>
</dbReference>
<dbReference type="InterPro" id="IPR001451">
    <property type="entry name" value="Hexapep"/>
</dbReference>
<dbReference type="InterPro" id="IPR018357">
    <property type="entry name" value="Hexapep_transf_CS"/>
</dbReference>
<dbReference type="InterPro" id="IPR010137">
    <property type="entry name" value="Lipid_A_LpxA"/>
</dbReference>
<dbReference type="InterPro" id="IPR011004">
    <property type="entry name" value="Trimer_LpxA-like_sf"/>
</dbReference>
<dbReference type="NCBIfam" id="TIGR01852">
    <property type="entry name" value="lipid_A_lpxA"/>
    <property type="match status" value="1"/>
</dbReference>
<dbReference type="NCBIfam" id="NF003657">
    <property type="entry name" value="PRK05289.1"/>
    <property type="match status" value="1"/>
</dbReference>
<dbReference type="PANTHER" id="PTHR43480">
    <property type="entry name" value="ACYL-[ACYL-CARRIER-PROTEIN]--UDP-N-ACETYLGLUCOSAMINE O-ACYLTRANSFERASE"/>
    <property type="match status" value="1"/>
</dbReference>
<dbReference type="PANTHER" id="PTHR43480:SF1">
    <property type="entry name" value="ACYL-[ACYL-CARRIER-PROTEIN]--UDP-N-ACETYLGLUCOSAMINE O-ACYLTRANSFERASE, MITOCHONDRIAL-RELATED"/>
    <property type="match status" value="1"/>
</dbReference>
<dbReference type="Pfam" id="PF13720">
    <property type="entry name" value="Acetyltransf_11"/>
    <property type="match status" value="1"/>
</dbReference>
<dbReference type="Pfam" id="PF00132">
    <property type="entry name" value="Hexapep"/>
    <property type="match status" value="2"/>
</dbReference>
<dbReference type="PIRSF" id="PIRSF000456">
    <property type="entry name" value="UDP-GlcNAc_acltr"/>
    <property type="match status" value="1"/>
</dbReference>
<dbReference type="SUPFAM" id="SSF51161">
    <property type="entry name" value="Trimeric LpxA-like enzymes"/>
    <property type="match status" value="1"/>
</dbReference>
<dbReference type="PROSITE" id="PS00101">
    <property type="entry name" value="HEXAPEP_TRANSFERASES"/>
    <property type="match status" value="1"/>
</dbReference>
<accession>A8GUZ4</accession>